<organism>
    <name type="scientific">Streptococcus thermophilus (strain ATCC BAA-491 / LMD-9)</name>
    <dbReference type="NCBI Taxonomy" id="322159"/>
    <lineage>
        <taxon>Bacteria</taxon>
        <taxon>Bacillati</taxon>
        <taxon>Bacillota</taxon>
        <taxon>Bacilli</taxon>
        <taxon>Lactobacillales</taxon>
        <taxon>Streptococcaceae</taxon>
        <taxon>Streptococcus</taxon>
    </lineage>
</organism>
<name>GLYA_STRTD</name>
<gene>
    <name evidence="1" type="primary">glyA</name>
    <name type="ordered locus">STER_0796</name>
</gene>
<evidence type="ECO:0000255" key="1">
    <source>
        <dbReference type="HAMAP-Rule" id="MF_00051"/>
    </source>
</evidence>
<proteinExistence type="inferred from homology"/>
<comment type="function">
    <text evidence="1">Catalyzes the reversible interconversion of serine and glycine with tetrahydrofolate (THF) serving as the one-carbon carrier. This reaction serves as the major source of one-carbon groups required for the biosynthesis of purines, thymidylate, methionine, and other important biomolecules. Also exhibits THF-independent aldolase activity toward beta-hydroxyamino acids, producing glycine and aldehydes, via a retro-aldol mechanism.</text>
</comment>
<comment type="catalytic activity">
    <reaction evidence="1">
        <text>(6R)-5,10-methylene-5,6,7,8-tetrahydrofolate + glycine + H2O = (6S)-5,6,7,8-tetrahydrofolate + L-serine</text>
        <dbReference type="Rhea" id="RHEA:15481"/>
        <dbReference type="ChEBI" id="CHEBI:15377"/>
        <dbReference type="ChEBI" id="CHEBI:15636"/>
        <dbReference type="ChEBI" id="CHEBI:33384"/>
        <dbReference type="ChEBI" id="CHEBI:57305"/>
        <dbReference type="ChEBI" id="CHEBI:57453"/>
        <dbReference type="EC" id="2.1.2.1"/>
    </reaction>
</comment>
<comment type="cofactor">
    <cofactor evidence="1">
        <name>pyridoxal 5'-phosphate</name>
        <dbReference type="ChEBI" id="CHEBI:597326"/>
    </cofactor>
</comment>
<comment type="pathway">
    <text evidence="1">One-carbon metabolism; tetrahydrofolate interconversion.</text>
</comment>
<comment type="pathway">
    <text evidence="1">Amino-acid biosynthesis; glycine biosynthesis; glycine from L-serine: step 1/1.</text>
</comment>
<comment type="subunit">
    <text evidence="1">Homodimer.</text>
</comment>
<comment type="subcellular location">
    <subcellularLocation>
        <location evidence="1">Cytoplasm</location>
    </subcellularLocation>
</comment>
<comment type="similarity">
    <text evidence="1">Belongs to the SHMT family.</text>
</comment>
<feature type="chain" id="PRO_1000006335" description="Serine hydroxymethyltransferase">
    <location>
        <begin position="1"/>
        <end position="416"/>
    </location>
</feature>
<feature type="binding site" evidence="1">
    <location>
        <position position="121"/>
    </location>
    <ligand>
        <name>(6S)-5,6,7,8-tetrahydrofolate</name>
        <dbReference type="ChEBI" id="CHEBI:57453"/>
    </ligand>
</feature>
<feature type="binding site" evidence="1">
    <location>
        <begin position="125"/>
        <end position="127"/>
    </location>
    <ligand>
        <name>(6S)-5,6,7,8-tetrahydrofolate</name>
        <dbReference type="ChEBI" id="CHEBI:57453"/>
    </ligand>
</feature>
<feature type="binding site" evidence="1">
    <location>
        <begin position="355"/>
        <end position="357"/>
    </location>
    <ligand>
        <name>(6S)-5,6,7,8-tetrahydrofolate</name>
        <dbReference type="ChEBI" id="CHEBI:57453"/>
    </ligand>
</feature>
<feature type="site" description="Plays an important role in substrate specificity" evidence="1">
    <location>
        <position position="229"/>
    </location>
</feature>
<feature type="modified residue" description="N6-(pyridoxal phosphate)lysine" evidence="1">
    <location>
        <position position="230"/>
    </location>
</feature>
<dbReference type="EC" id="2.1.2.1" evidence="1"/>
<dbReference type="EMBL" id="CP000419">
    <property type="protein sequence ID" value="ABJ66045.1"/>
    <property type="molecule type" value="Genomic_DNA"/>
</dbReference>
<dbReference type="RefSeq" id="WP_011227085.1">
    <property type="nucleotide sequence ID" value="NC_008532.1"/>
</dbReference>
<dbReference type="SMR" id="Q03L77"/>
<dbReference type="KEGG" id="ste:STER_0796"/>
<dbReference type="HOGENOM" id="CLU_022477_2_1_9"/>
<dbReference type="UniPathway" id="UPA00193"/>
<dbReference type="UniPathway" id="UPA00288">
    <property type="reaction ID" value="UER01023"/>
</dbReference>
<dbReference type="GO" id="GO:0005829">
    <property type="term" value="C:cytosol"/>
    <property type="evidence" value="ECO:0007669"/>
    <property type="project" value="TreeGrafter"/>
</dbReference>
<dbReference type="GO" id="GO:0004372">
    <property type="term" value="F:glycine hydroxymethyltransferase activity"/>
    <property type="evidence" value="ECO:0007669"/>
    <property type="project" value="UniProtKB-UniRule"/>
</dbReference>
<dbReference type="GO" id="GO:0030170">
    <property type="term" value="F:pyridoxal phosphate binding"/>
    <property type="evidence" value="ECO:0007669"/>
    <property type="project" value="UniProtKB-UniRule"/>
</dbReference>
<dbReference type="GO" id="GO:0019264">
    <property type="term" value="P:glycine biosynthetic process from serine"/>
    <property type="evidence" value="ECO:0007669"/>
    <property type="project" value="UniProtKB-UniRule"/>
</dbReference>
<dbReference type="GO" id="GO:0035999">
    <property type="term" value="P:tetrahydrofolate interconversion"/>
    <property type="evidence" value="ECO:0007669"/>
    <property type="project" value="UniProtKB-UniRule"/>
</dbReference>
<dbReference type="CDD" id="cd00378">
    <property type="entry name" value="SHMT"/>
    <property type="match status" value="1"/>
</dbReference>
<dbReference type="FunFam" id="3.40.640.10:FF:000001">
    <property type="entry name" value="Serine hydroxymethyltransferase"/>
    <property type="match status" value="1"/>
</dbReference>
<dbReference type="FunFam" id="3.90.1150.10:FF:000072">
    <property type="entry name" value="Serine hydroxymethyltransferase"/>
    <property type="match status" value="1"/>
</dbReference>
<dbReference type="Gene3D" id="3.90.1150.10">
    <property type="entry name" value="Aspartate Aminotransferase, domain 1"/>
    <property type="match status" value="1"/>
</dbReference>
<dbReference type="Gene3D" id="3.40.640.10">
    <property type="entry name" value="Type I PLP-dependent aspartate aminotransferase-like (Major domain)"/>
    <property type="match status" value="1"/>
</dbReference>
<dbReference type="HAMAP" id="MF_00051">
    <property type="entry name" value="SHMT"/>
    <property type="match status" value="1"/>
</dbReference>
<dbReference type="InterPro" id="IPR015424">
    <property type="entry name" value="PyrdxlP-dep_Trfase"/>
</dbReference>
<dbReference type="InterPro" id="IPR015421">
    <property type="entry name" value="PyrdxlP-dep_Trfase_major"/>
</dbReference>
<dbReference type="InterPro" id="IPR015422">
    <property type="entry name" value="PyrdxlP-dep_Trfase_small"/>
</dbReference>
<dbReference type="InterPro" id="IPR001085">
    <property type="entry name" value="Ser_HO-MeTrfase"/>
</dbReference>
<dbReference type="InterPro" id="IPR049943">
    <property type="entry name" value="Ser_HO-MeTrfase-like"/>
</dbReference>
<dbReference type="InterPro" id="IPR019798">
    <property type="entry name" value="Ser_HO-MeTrfase_PLP_BS"/>
</dbReference>
<dbReference type="InterPro" id="IPR039429">
    <property type="entry name" value="SHMT-like_dom"/>
</dbReference>
<dbReference type="NCBIfam" id="NF000586">
    <property type="entry name" value="PRK00011.1"/>
    <property type="match status" value="1"/>
</dbReference>
<dbReference type="PANTHER" id="PTHR11680">
    <property type="entry name" value="SERINE HYDROXYMETHYLTRANSFERASE"/>
    <property type="match status" value="1"/>
</dbReference>
<dbReference type="PANTHER" id="PTHR11680:SF35">
    <property type="entry name" value="SERINE HYDROXYMETHYLTRANSFERASE 1"/>
    <property type="match status" value="1"/>
</dbReference>
<dbReference type="Pfam" id="PF00464">
    <property type="entry name" value="SHMT"/>
    <property type="match status" value="1"/>
</dbReference>
<dbReference type="PIRSF" id="PIRSF000412">
    <property type="entry name" value="SHMT"/>
    <property type="match status" value="1"/>
</dbReference>
<dbReference type="SUPFAM" id="SSF53383">
    <property type="entry name" value="PLP-dependent transferases"/>
    <property type="match status" value="1"/>
</dbReference>
<dbReference type="PROSITE" id="PS00096">
    <property type="entry name" value="SHMT"/>
    <property type="match status" value="1"/>
</dbReference>
<keyword id="KW-0028">Amino-acid biosynthesis</keyword>
<keyword id="KW-0963">Cytoplasm</keyword>
<keyword id="KW-0554">One-carbon metabolism</keyword>
<keyword id="KW-0663">Pyridoxal phosphate</keyword>
<keyword id="KW-0808">Transferase</keyword>
<accession>Q03L77</accession>
<reference key="1">
    <citation type="journal article" date="2006" name="Proc. Natl. Acad. Sci. U.S.A.">
        <title>Comparative genomics of the lactic acid bacteria.</title>
        <authorList>
            <person name="Makarova K.S."/>
            <person name="Slesarev A."/>
            <person name="Wolf Y.I."/>
            <person name="Sorokin A."/>
            <person name="Mirkin B."/>
            <person name="Koonin E.V."/>
            <person name="Pavlov A."/>
            <person name="Pavlova N."/>
            <person name="Karamychev V."/>
            <person name="Polouchine N."/>
            <person name="Shakhova V."/>
            <person name="Grigoriev I."/>
            <person name="Lou Y."/>
            <person name="Rohksar D."/>
            <person name="Lucas S."/>
            <person name="Huang K."/>
            <person name="Goodstein D.M."/>
            <person name="Hawkins T."/>
            <person name="Plengvidhya V."/>
            <person name="Welker D."/>
            <person name="Hughes J."/>
            <person name="Goh Y."/>
            <person name="Benson A."/>
            <person name="Baldwin K."/>
            <person name="Lee J.-H."/>
            <person name="Diaz-Muniz I."/>
            <person name="Dosti B."/>
            <person name="Smeianov V."/>
            <person name="Wechter W."/>
            <person name="Barabote R."/>
            <person name="Lorca G."/>
            <person name="Altermann E."/>
            <person name="Barrangou R."/>
            <person name="Ganesan B."/>
            <person name="Xie Y."/>
            <person name="Rawsthorne H."/>
            <person name="Tamir D."/>
            <person name="Parker C."/>
            <person name="Breidt F."/>
            <person name="Broadbent J.R."/>
            <person name="Hutkins R."/>
            <person name="O'Sullivan D."/>
            <person name="Steele J."/>
            <person name="Unlu G."/>
            <person name="Saier M.H. Jr."/>
            <person name="Klaenhammer T."/>
            <person name="Richardson P."/>
            <person name="Kozyavkin S."/>
            <person name="Weimer B.C."/>
            <person name="Mills D.A."/>
        </authorList>
    </citation>
    <scope>NUCLEOTIDE SEQUENCE [LARGE SCALE GENOMIC DNA]</scope>
    <source>
        <strain>ATCC BAA-491 / LMD-9</strain>
    </source>
</reference>
<protein>
    <recommendedName>
        <fullName evidence="1">Serine hydroxymethyltransferase</fullName>
        <shortName evidence="1">SHMT</shortName>
        <shortName evidence="1">Serine methylase</shortName>
        <ecNumber evidence="1">2.1.2.1</ecNumber>
    </recommendedName>
</protein>
<sequence length="416" mass="45086">MIFDKEDYKAFDPELWNAIDAEAERQQNNIELIASENVVSKAVMAAQGTLLTNKYAEGYPGKRYYGGTAVIDVVETLAIERAKKLFGAKFANVQPHSGSQANAAVYMSLIQPGDTVMGMDLSAGGHLTHGAPVSFSGKTYNFVSYNVDKESELLDYDAILAQAKEVRPKLIVAGASAYSRIIDFAKFREIADAVGAYLMVDMAHIAGLVASGHHPSPVPYAHVTTTTTHKTLRGPRGGLILTDDEDIAKKLNSAVFPGLQGGPLEHVIAAKAVALKEALDPAFKEYGENVIKNAAAMADVFNQHPDFRVISGGTNNHLFLVDVTKVVENGKVAQNVLEEVNITLNKNSIPYEQLSPFKTSGIRVGSPAITSRGMGEAESRQIAEWMVEALENHDKPEVLERIRGDVKVLTDAFPLY</sequence>